<comment type="function">
    <text evidence="1">Heme chaperone required for the biogenesis of c-type cytochromes. Transiently binds heme delivered by CcmC and transfers the heme to apo-cytochromes in a process facilitated by CcmF and CcmH.</text>
</comment>
<comment type="subcellular location">
    <subcellularLocation>
        <location evidence="1">Cell inner membrane</location>
        <topology evidence="1">Single-pass type II membrane protein</topology>
        <orientation evidence="1">Periplasmic side</orientation>
    </subcellularLocation>
</comment>
<comment type="similarity">
    <text evidence="1">Belongs to the CcmE/CycJ family.</text>
</comment>
<feature type="chain" id="PRO_1000088526" description="Cytochrome c-type biogenesis protein CcmE">
    <location>
        <begin position="1"/>
        <end position="149"/>
    </location>
</feature>
<feature type="topological domain" description="Cytoplasmic" evidence="1">
    <location>
        <begin position="1"/>
        <end position="7"/>
    </location>
</feature>
<feature type="transmembrane region" description="Helical; Signal-anchor for type II membrane protein" evidence="1">
    <location>
        <begin position="8"/>
        <end position="28"/>
    </location>
</feature>
<feature type="topological domain" description="Periplasmic" evidence="1">
    <location>
        <begin position="29"/>
        <end position="149"/>
    </location>
</feature>
<feature type="binding site" description="covalent" evidence="1">
    <location>
        <position position="123"/>
    </location>
    <ligand>
        <name>heme</name>
        <dbReference type="ChEBI" id="CHEBI:30413"/>
    </ligand>
</feature>
<feature type="binding site" description="axial binding residue" evidence="1">
    <location>
        <position position="127"/>
    </location>
    <ligand>
        <name>heme</name>
        <dbReference type="ChEBI" id="CHEBI:30413"/>
    </ligand>
    <ligandPart>
        <name>Fe</name>
        <dbReference type="ChEBI" id="CHEBI:18248"/>
    </ligandPart>
</feature>
<name>CCME_HALHL</name>
<dbReference type="EMBL" id="CP000544">
    <property type="protein sequence ID" value="ABM62135.1"/>
    <property type="molecule type" value="Genomic_DNA"/>
</dbReference>
<dbReference type="RefSeq" id="WP_011814157.1">
    <property type="nucleotide sequence ID" value="NC_008789.1"/>
</dbReference>
<dbReference type="SMR" id="A1WWS3"/>
<dbReference type="STRING" id="349124.Hhal_1368"/>
<dbReference type="KEGG" id="hha:Hhal_1368"/>
<dbReference type="eggNOG" id="COG2332">
    <property type="taxonomic scope" value="Bacteria"/>
</dbReference>
<dbReference type="HOGENOM" id="CLU_079503_1_1_6"/>
<dbReference type="OrthoDB" id="9793584at2"/>
<dbReference type="Proteomes" id="UP000000647">
    <property type="component" value="Chromosome"/>
</dbReference>
<dbReference type="GO" id="GO:0005886">
    <property type="term" value="C:plasma membrane"/>
    <property type="evidence" value="ECO:0007669"/>
    <property type="project" value="UniProtKB-SubCell"/>
</dbReference>
<dbReference type="GO" id="GO:0020037">
    <property type="term" value="F:heme binding"/>
    <property type="evidence" value="ECO:0007669"/>
    <property type="project" value="InterPro"/>
</dbReference>
<dbReference type="GO" id="GO:0046872">
    <property type="term" value="F:metal ion binding"/>
    <property type="evidence" value="ECO:0007669"/>
    <property type="project" value="UniProtKB-KW"/>
</dbReference>
<dbReference type="GO" id="GO:0017004">
    <property type="term" value="P:cytochrome complex assembly"/>
    <property type="evidence" value="ECO:0007669"/>
    <property type="project" value="UniProtKB-KW"/>
</dbReference>
<dbReference type="FunFam" id="2.40.50.140:FF:000104">
    <property type="entry name" value="Cytochrome c-type biogenesis protein CcmE"/>
    <property type="match status" value="1"/>
</dbReference>
<dbReference type="Gene3D" id="2.40.50.140">
    <property type="entry name" value="Nucleic acid-binding proteins"/>
    <property type="match status" value="1"/>
</dbReference>
<dbReference type="HAMAP" id="MF_01959">
    <property type="entry name" value="CcmE"/>
    <property type="match status" value="1"/>
</dbReference>
<dbReference type="InterPro" id="IPR004329">
    <property type="entry name" value="CcmE"/>
</dbReference>
<dbReference type="InterPro" id="IPR036127">
    <property type="entry name" value="CcmE-like_sf"/>
</dbReference>
<dbReference type="InterPro" id="IPR012340">
    <property type="entry name" value="NA-bd_OB-fold"/>
</dbReference>
<dbReference type="NCBIfam" id="NF009727">
    <property type="entry name" value="PRK13254.1-1"/>
    <property type="match status" value="1"/>
</dbReference>
<dbReference type="NCBIfam" id="NF009729">
    <property type="entry name" value="PRK13254.1-3"/>
    <property type="match status" value="1"/>
</dbReference>
<dbReference type="NCBIfam" id="NF009731">
    <property type="entry name" value="PRK13254.1-5"/>
    <property type="match status" value="1"/>
</dbReference>
<dbReference type="PANTHER" id="PTHR34128">
    <property type="entry name" value="CYTOCHROME C-TYPE BIOGENESIS PROTEIN CCME HOMOLOG, MITOCHONDRIAL"/>
    <property type="match status" value="1"/>
</dbReference>
<dbReference type="PANTHER" id="PTHR34128:SF2">
    <property type="entry name" value="CYTOCHROME C-TYPE BIOGENESIS PROTEIN CCME HOMOLOG, MITOCHONDRIAL"/>
    <property type="match status" value="1"/>
</dbReference>
<dbReference type="Pfam" id="PF03100">
    <property type="entry name" value="CcmE"/>
    <property type="match status" value="1"/>
</dbReference>
<dbReference type="SUPFAM" id="SSF82093">
    <property type="entry name" value="Heme chaperone CcmE"/>
    <property type="match status" value="1"/>
</dbReference>
<protein>
    <recommendedName>
        <fullName evidence="1">Cytochrome c-type biogenesis protein CcmE</fullName>
    </recommendedName>
    <alternativeName>
        <fullName evidence="1">Cytochrome c maturation protein E</fullName>
    </alternativeName>
    <alternativeName>
        <fullName evidence="1">Heme chaperone CcmE</fullName>
    </alternativeName>
</protein>
<reference key="1">
    <citation type="submission" date="2006-12" db="EMBL/GenBank/DDBJ databases">
        <title>Complete sequence of Halorhodospira halophila SL1.</title>
        <authorList>
            <consortium name="US DOE Joint Genome Institute"/>
            <person name="Copeland A."/>
            <person name="Lucas S."/>
            <person name="Lapidus A."/>
            <person name="Barry K."/>
            <person name="Detter J.C."/>
            <person name="Glavina del Rio T."/>
            <person name="Hammon N."/>
            <person name="Israni S."/>
            <person name="Dalin E."/>
            <person name="Tice H."/>
            <person name="Pitluck S."/>
            <person name="Saunders E."/>
            <person name="Brettin T."/>
            <person name="Bruce D."/>
            <person name="Han C."/>
            <person name="Tapia R."/>
            <person name="Schmutz J."/>
            <person name="Larimer F."/>
            <person name="Land M."/>
            <person name="Hauser L."/>
            <person name="Kyrpides N."/>
            <person name="Mikhailova N."/>
            <person name="Hoff W."/>
            <person name="Richardson P."/>
        </authorList>
    </citation>
    <scope>NUCLEOTIDE SEQUENCE [LARGE SCALE GENOMIC DNA]</scope>
    <source>
        <strain>DSM 244 / SL1</strain>
    </source>
</reference>
<sequence>MKKRHQRLFLVLGVVAGVSVATALVLNAFRDNMTFFITPSEVMAKSDMPERHFRIGGLVEDGSVERDSDSTQVRFRVTDTEASVPVDFEGILPDLFREGQGVVVEGRITSNGVFKADNVMARHDEDYMPAEAQEALDRVEHSVDEVGDY</sequence>
<gene>
    <name evidence="1" type="primary">ccmE</name>
    <name evidence="1" type="synonym">cycJ</name>
    <name type="ordered locus">Hhal_1368</name>
</gene>
<organism>
    <name type="scientific">Halorhodospira halophila (strain DSM 244 / SL1)</name>
    <name type="common">Ectothiorhodospira halophila (strain DSM 244 / SL1)</name>
    <dbReference type="NCBI Taxonomy" id="349124"/>
    <lineage>
        <taxon>Bacteria</taxon>
        <taxon>Pseudomonadati</taxon>
        <taxon>Pseudomonadota</taxon>
        <taxon>Gammaproteobacteria</taxon>
        <taxon>Chromatiales</taxon>
        <taxon>Ectothiorhodospiraceae</taxon>
        <taxon>Halorhodospira</taxon>
    </lineage>
</organism>
<evidence type="ECO:0000255" key="1">
    <source>
        <dbReference type="HAMAP-Rule" id="MF_01959"/>
    </source>
</evidence>
<proteinExistence type="inferred from homology"/>
<accession>A1WWS3</accession>
<keyword id="KW-0997">Cell inner membrane</keyword>
<keyword id="KW-1003">Cell membrane</keyword>
<keyword id="KW-0201">Cytochrome c-type biogenesis</keyword>
<keyword id="KW-0349">Heme</keyword>
<keyword id="KW-0408">Iron</keyword>
<keyword id="KW-0472">Membrane</keyword>
<keyword id="KW-0479">Metal-binding</keyword>
<keyword id="KW-1185">Reference proteome</keyword>
<keyword id="KW-0735">Signal-anchor</keyword>
<keyword id="KW-0812">Transmembrane</keyword>
<keyword id="KW-1133">Transmembrane helix</keyword>